<reference evidence="6" key="1">
    <citation type="journal article" date="2005" name="Genome Res.">
        <title>Comparative genome sequencing of Drosophila pseudoobscura: chromosomal, gene, and cis-element evolution.</title>
        <authorList>
            <person name="Richards S."/>
            <person name="Liu Y."/>
            <person name="Bettencourt B.R."/>
            <person name="Hradecky P."/>
            <person name="Letovsky S."/>
            <person name="Nielsen R."/>
            <person name="Thornton K."/>
            <person name="Hubisz M.J."/>
            <person name="Chen R."/>
            <person name="Meisel R.P."/>
            <person name="Couronne O."/>
            <person name="Hua S."/>
            <person name="Smith M.A."/>
            <person name="Zhang P."/>
            <person name="Liu J."/>
            <person name="Bussemaker H.J."/>
            <person name="van Batenburg M.F."/>
            <person name="Howells S.L."/>
            <person name="Scherer S.E."/>
            <person name="Sodergren E."/>
            <person name="Matthews B.B."/>
            <person name="Crosby M.A."/>
            <person name="Schroeder A.J."/>
            <person name="Ortiz-Barrientos D."/>
            <person name="Rives C.M."/>
            <person name="Metzker M.L."/>
            <person name="Muzny D.M."/>
            <person name="Scott G."/>
            <person name="Steffen D."/>
            <person name="Wheeler D.A."/>
            <person name="Worley K.C."/>
            <person name="Havlak P."/>
            <person name="Durbin K.J."/>
            <person name="Egan A."/>
            <person name="Gill R."/>
            <person name="Hume J."/>
            <person name="Morgan M.B."/>
            <person name="Miner G."/>
            <person name="Hamilton C."/>
            <person name="Huang Y."/>
            <person name="Waldron L."/>
            <person name="Verduzco D."/>
            <person name="Clerc-Blankenburg K.P."/>
            <person name="Dubchak I."/>
            <person name="Noor M.A.F."/>
            <person name="Anderson W."/>
            <person name="White K.P."/>
            <person name="Clark A.G."/>
            <person name="Schaeffer S.W."/>
            <person name="Gelbart W.M."/>
            <person name="Weinstock G.M."/>
            <person name="Gibbs R.A."/>
        </authorList>
    </citation>
    <scope>NUCLEOTIDE SEQUENCE [LARGE SCALE GENOMIC DNA]</scope>
    <source>
        <strain>MV2-25 / Tucson 14011-0121.94</strain>
    </source>
</reference>
<comment type="function">
    <text evidence="2">Adaptins are components of the adapter complexes which link clathrin to receptors in coated vesicles. Clathrin-associated protein complexes are believed to interact with the cytoplasmic tails of membrane proteins, leading to their selection and concentration. Alpha adaptin is a subunit of the plasma membrane adapter (By similarity).</text>
</comment>
<comment type="subunit">
    <text evidence="1">Adaptor protein complex 2 (AP-2) is a heterotetramer composed of two large adaptins (alpha-type and beta-type subunits), a medium adaptin (mu-type subunit AP50) and a small adaptin (sigma-type subunit AP17).</text>
</comment>
<comment type="subcellular location">
    <subcellularLocation>
        <location evidence="2">Cell membrane</location>
        <topology evidence="2">Peripheral membrane protein</topology>
        <orientation evidence="2">Cytoplasmic side</orientation>
    </subcellularLocation>
    <subcellularLocation>
        <location evidence="2">Membrane</location>
        <location evidence="2">Coated pit</location>
        <topology evidence="2">Peripheral membrane protein</topology>
        <orientation evidence="2">Cytoplasmic side</orientation>
    </subcellularLocation>
    <text evidence="2">Component of the coat surrounding the cytoplasmic face of coated vesicles in the plasma membrane.</text>
</comment>
<comment type="similarity">
    <text evidence="3">Belongs to the adapter complexes large subunit family.</text>
</comment>
<comment type="sequence caution" evidence="5">
    <conflict type="erroneous gene model prediction">
        <sequence resource="EMBL-CDS" id="EAL33505"/>
    </conflict>
</comment>
<evidence type="ECO:0000250" key="1"/>
<evidence type="ECO:0000250" key="2">
    <source>
        <dbReference type="UniProtKB" id="P91926"/>
    </source>
</evidence>
<evidence type="ECO:0000255" key="3"/>
<evidence type="ECO:0000256" key="4">
    <source>
        <dbReference type="SAM" id="MobiDB-lite"/>
    </source>
</evidence>
<evidence type="ECO:0000305" key="5"/>
<evidence type="ECO:0000312" key="6">
    <source>
        <dbReference type="EMBL" id="EAL33505.1"/>
    </source>
</evidence>
<accession>Q29N38</accession>
<protein>
    <recommendedName>
        <fullName>AP-2 complex subunit alpha</fullName>
    </recommendedName>
    <alternativeName>
        <fullName>Alpha-adaptin</fullName>
    </alternativeName>
</protein>
<sequence length="939" mass="105412">MAPVRGDGMRGLAVFISDIRNCKSKEAEVKRINKELANIRSKFKGDKTLDGYQKKKYVCKLLFIFLLGHDIDFGHMEAVNLLSSNKYSEKQIGYLFISVLVNTNSDLIRLIIQSIKNDLQSRNPVHVNLALQCIANIGSRDMAESFSNEIPKLLVSGDTMDVVKQSAALCLLRLFRSSPDIIPGGEWTSRIIHLLNDQHMGVVTAATSLIDALVKCNPDEYKGCVNLAVSRLSRIVTASYTDLQDYTYYFVPAPWLSVKLLRLLQNYNPVTEEAGVRARLNETLETILNKAQEPPKSKKVQHSNAKNAVLFEAINLIIHSDSEPNLLVRACNQLGQFLSNRETNLRYLALESMCHLATSEFSHEEVKKHQEVVILSMKMEKDVSVRQMAVDLLYAMCDRGNAEEIVQEMLNYLETADYSIREEMVLKVAILAEKYATDYTWYVDVILNLIRIAGDYVSEEVWYRVIQIVINREEVQGYAAKTVFEALQAPACHENMVKVGGYILGEFGNLIAGDSRSAPLVQFKLLHSKYHLCSPMTRALLLSTYIKFINLFPEIRTNIQDVFRQHSNLRSADAELQQRASEYLQLSIVASTDVLATVLEEMPSFPERESSILAVLKKKKPGRVPENEIRESKSPAPTSGPGSVLQNNVHVNNSHSKLNNSNANTDLLGLSTPPANNVGSNSNSTLIDVLGDIYGSNNNSSAVYNTKKFLFKNNGVLFENEMLQIGVKSEFRQNLGRLGLFYGNKTQVPLSNFNPVLQWSAEETLKLNVQMKAVEPTLEAGAQIQQLLTAECIEDYADAPTIEISFRYNGTQQKFSIKLPLSVNKFFEPTEMNAESFFARWKNLSGEQQRSQKVFKAAQPLDLPGARNKLMGFGMQLLDSVDPNPDNMVCAGIIHTQSQQVGCLMRLEPNKQAQMFRLTVRASKETVTREICDLLADQF</sequence>
<dbReference type="EMBL" id="CH379060">
    <property type="protein sequence ID" value="EAL33505.1"/>
    <property type="status" value="ALT_SEQ"/>
    <property type="molecule type" value="Genomic_DNA"/>
</dbReference>
<dbReference type="SMR" id="Q29N38"/>
<dbReference type="FunCoup" id="Q29N38">
    <property type="interactions" value="2235"/>
</dbReference>
<dbReference type="STRING" id="46245.Q29N38"/>
<dbReference type="EnsemblMetazoa" id="FBtr0281942">
    <property type="protein sequence ID" value="FBpp0280380"/>
    <property type="gene ID" value="FBgn0078071"/>
</dbReference>
<dbReference type="KEGG" id="dpo:4817178"/>
<dbReference type="CTD" id="33211"/>
<dbReference type="eggNOG" id="KOG1077">
    <property type="taxonomic scope" value="Eukaryota"/>
</dbReference>
<dbReference type="HOGENOM" id="CLU_003824_1_0_1"/>
<dbReference type="InParanoid" id="Q29N38"/>
<dbReference type="OMA" id="PVLMHRY"/>
<dbReference type="PhylomeDB" id="Q29N38"/>
<dbReference type="Proteomes" id="UP000001819">
    <property type="component" value="Chromosome 4"/>
</dbReference>
<dbReference type="Bgee" id="FBgn0078071">
    <property type="expression patterns" value="Expressed in insect adult head and 2 other cell types or tissues"/>
</dbReference>
<dbReference type="GO" id="GO:0030122">
    <property type="term" value="C:AP-2 adaptor complex"/>
    <property type="evidence" value="ECO:0007669"/>
    <property type="project" value="InterPro"/>
</dbReference>
<dbReference type="GO" id="GO:0005905">
    <property type="term" value="C:clathrin-coated pit"/>
    <property type="evidence" value="ECO:0000250"/>
    <property type="project" value="UniProtKB"/>
</dbReference>
<dbReference type="GO" id="GO:0005886">
    <property type="term" value="C:plasma membrane"/>
    <property type="evidence" value="ECO:0000250"/>
    <property type="project" value="UniProtKB"/>
</dbReference>
<dbReference type="GO" id="GO:0098793">
    <property type="term" value="C:presynapse"/>
    <property type="evidence" value="ECO:0007669"/>
    <property type="project" value="GOC"/>
</dbReference>
<dbReference type="GO" id="GO:0035615">
    <property type="term" value="F:clathrin adaptor activity"/>
    <property type="evidence" value="ECO:0007669"/>
    <property type="project" value="InterPro"/>
</dbReference>
<dbReference type="GO" id="GO:0072583">
    <property type="term" value="P:clathrin-dependent endocytosis"/>
    <property type="evidence" value="ECO:0007669"/>
    <property type="project" value="InterPro"/>
</dbReference>
<dbReference type="GO" id="GO:0006886">
    <property type="term" value="P:intracellular protein transport"/>
    <property type="evidence" value="ECO:0007669"/>
    <property type="project" value="InterPro"/>
</dbReference>
<dbReference type="GO" id="GO:0015031">
    <property type="term" value="P:protein transport"/>
    <property type="evidence" value="ECO:0000250"/>
    <property type="project" value="UniProtKB"/>
</dbReference>
<dbReference type="GO" id="GO:0048488">
    <property type="term" value="P:synaptic vesicle endocytosis"/>
    <property type="evidence" value="ECO:0000250"/>
    <property type="project" value="UniProtKB"/>
</dbReference>
<dbReference type="FunFam" id="1.25.10.10:FF:000020">
    <property type="entry name" value="AP-2 complex subunit alpha"/>
    <property type="match status" value="1"/>
</dbReference>
<dbReference type="FunFam" id="2.60.40.1230:FF:000003">
    <property type="entry name" value="AP-2 complex subunit alpha"/>
    <property type="match status" value="1"/>
</dbReference>
<dbReference type="FunFam" id="3.30.310.10:FF:000004">
    <property type="entry name" value="AP-2 complex subunit alpha"/>
    <property type="match status" value="1"/>
</dbReference>
<dbReference type="Gene3D" id="2.60.40.1230">
    <property type="match status" value="1"/>
</dbReference>
<dbReference type="Gene3D" id="1.25.10.10">
    <property type="entry name" value="Leucine-rich Repeat Variant"/>
    <property type="match status" value="1"/>
</dbReference>
<dbReference type="Gene3D" id="3.30.310.10">
    <property type="entry name" value="TATA-Binding Protein"/>
    <property type="match status" value="1"/>
</dbReference>
<dbReference type="InterPro" id="IPR050840">
    <property type="entry name" value="Adaptor_Complx_Large_Subunit"/>
</dbReference>
<dbReference type="InterPro" id="IPR017104">
    <property type="entry name" value="AP2_complex_asu"/>
</dbReference>
<dbReference type="InterPro" id="IPR011989">
    <property type="entry name" value="ARM-like"/>
</dbReference>
<dbReference type="InterPro" id="IPR016024">
    <property type="entry name" value="ARM-type_fold"/>
</dbReference>
<dbReference type="InterPro" id="IPR002553">
    <property type="entry name" value="Clathrin/coatomer_adapt-like_N"/>
</dbReference>
<dbReference type="InterPro" id="IPR003164">
    <property type="entry name" value="Clathrin_a-adaptin_app_sub_C"/>
</dbReference>
<dbReference type="InterPro" id="IPR008152">
    <property type="entry name" value="Clathrin_a/b/g-adaptin_app_Ig"/>
</dbReference>
<dbReference type="InterPro" id="IPR013041">
    <property type="entry name" value="Clathrin_app_Ig-like_sf"/>
</dbReference>
<dbReference type="InterPro" id="IPR009028">
    <property type="entry name" value="Coatomer/calthrin_app_sub_C"/>
</dbReference>
<dbReference type="InterPro" id="IPR012295">
    <property type="entry name" value="TBP_dom_sf"/>
</dbReference>
<dbReference type="PANTHER" id="PTHR22780">
    <property type="entry name" value="ADAPTIN, ALPHA/GAMMA/EPSILON"/>
    <property type="match status" value="1"/>
</dbReference>
<dbReference type="Pfam" id="PF01602">
    <property type="entry name" value="Adaptin_N"/>
    <property type="match status" value="1"/>
</dbReference>
<dbReference type="Pfam" id="PF02296">
    <property type="entry name" value="Alpha_adaptin_C"/>
    <property type="match status" value="1"/>
</dbReference>
<dbReference type="Pfam" id="PF02883">
    <property type="entry name" value="Alpha_adaptinC2"/>
    <property type="match status" value="1"/>
</dbReference>
<dbReference type="PIRSF" id="PIRSF037091">
    <property type="entry name" value="AP2_complex_alpha"/>
    <property type="match status" value="1"/>
</dbReference>
<dbReference type="SMART" id="SM00809">
    <property type="entry name" value="Alpha_adaptinC2"/>
    <property type="match status" value="1"/>
</dbReference>
<dbReference type="SUPFAM" id="SSF48371">
    <property type="entry name" value="ARM repeat"/>
    <property type="match status" value="1"/>
</dbReference>
<dbReference type="SUPFAM" id="SSF49348">
    <property type="entry name" value="Clathrin adaptor appendage domain"/>
    <property type="match status" value="1"/>
</dbReference>
<dbReference type="SUPFAM" id="SSF55711">
    <property type="entry name" value="Subdomain of clathrin and coatomer appendage domain"/>
    <property type="match status" value="1"/>
</dbReference>
<proteinExistence type="inferred from homology"/>
<keyword id="KW-1003">Cell membrane</keyword>
<keyword id="KW-0168">Coated pit</keyword>
<keyword id="KW-0254">Endocytosis</keyword>
<keyword id="KW-0472">Membrane</keyword>
<keyword id="KW-0653">Protein transport</keyword>
<keyword id="KW-1185">Reference proteome</keyword>
<keyword id="KW-0813">Transport</keyword>
<gene>
    <name evidence="2" type="primary">alpha-Adaptin</name>
    <name type="ORF">GA18063</name>
</gene>
<feature type="chain" id="PRO_0000278177" description="AP-2 complex subunit alpha">
    <location>
        <begin position="1"/>
        <end position="939"/>
    </location>
</feature>
<feature type="region of interest" description="Disordered" evidence="4">
    <location>
        <begin position="623"/>
        <end position="660"/>
    </location>
</feature>
<feature type="compositionally biased region" description="Basic and acidic residues" evidence="4">
    <location>
        <begin position="623"/>
        <end position="633"/>
    </location>
</feature>
<feature type="compositionally biased region" description="Polar residues" evidence="4">
    <location>
        <begin position="635"/>
        <end position="660"/>
    </location>
</feature>
<organism>
    <name type="scientific">Drosophila pseudoobscura pseudoobscura</name>
    <name type="common">Fruit fly</name>
    <dbReference type="NCBI Taxonomy" id="46245"/>
    <lineage>
        <taxon>Eukaryota</taxon>
        <taxon>Metazoa</taxon>
        <taxon>Ecdysozoa</taxon>
        <taxon>Arthropoda</taxon>
        <taxon>Hexapoda</taxon>
        <taxon>Insecta</taxon>
        <taxon>Pterygota</taxon>
        <taxon>Neoptera</taxon>
        <taxon>Endopterygota</taxon>
        <taxon>Diptera</taxon>
        <taxon>Brachycera</taxon>
        <taxon>Muscomorpha</taxon>
        <taxon>Ephydroidea</taxon>
        <taxon>Drosophilidae</taxon>
        <taxon>Drosophila</taxon>
        <taxon>Sophophora</taxon>
    </lineage>
</organism>
<name>AP2A_DROPS</name>